<evidence type="ECO:0000255" key="1">
    <source>
        <dbReference type="HAMAP-Rule" id="MF_00331"/>
    </source>
</evidence>
<name>ISCS_SHEHH</name>
<keyword id="KW-0001">2Fe-2S</keyword>
<keyword id="KW-0963">Cytoplasm</keyword>
<keyword id="KW-0408">Iron</keyword>
<keyword id="KW-0411">Iron-sulfur</keyword>
<keyword id="KW-0479">Metal-binding</keyword>
<keyword id="KW-0663">Pyridoxal phosphate</keyword>
<keyword id="KW-0808">Transferase</keyword>
<sequence>MKLPIYLDYAATTPVDPRVAEKMMQCLTMDGIFGNPASRSHRYGWQAEEAVDIARNQVADLINADPREIVFTSGATESDNLAIKGVAHFYHKKGKHIITSKTEHKAVLDTCRQLEREGYEVTYLQPEPSGLIPVAMIEAAMREDTILVSIMQVNNEIGVIQDIDAIGELCRSRKIIFHVDAAQSAGKLPIDVQTTKVDLMSISGHKMYGPKGIGALYVSRKPRIRLEAAMHGGGHERGMRSGTLATHQIVGMGEAAAIAKADMVVDNERIARLRDKLWNGIKHIEETYINGDVEKRACGSLNVSFNFVEGESLMMALKDLAVSSGSACTSASLEPSYVLRALGLNDEMAHSSIRFSIGRFTTDEEIDHAIETIKESIGNLREMSPLWEMFKDGIDLDSVQWAHH</sequence>
<organism>
    <name type="scientific">Shewanella halifaxensis (strain HAW-EB4)</name>
    <dbReference type="NCBI Taxonomy" id="458817"/>
    <lineage>
        <taxon>Bacteria</taxon>
        <taxon>Pseudomonadati</taxon>
        <taxon>Pseudomonadota</taxon>
        <taxon>Gammaproteobacteria</taxon>
        <taxon>Alteromonadales</taxon>
        <taxon>Shewanellaceae</taxon>
        <taxon>Shewanella</taxon>
    </lineage>
</organism>
<feature type="chain" id="PRO_1000079212" description="Cysteine desulfurase IscS">
    <location>
        <begin position="1"/>
        <end position="404"/>
    </location>
</feature>
<feature type="active site" description="Cysteine persulfide intermediate" evidence="1">
    <location>
        <position position="328"/>
    </location>
</feature>
<feature type="binding site" evidence="1">
    <location>
        <begin position="75"/>
        <end position="76"/>
    </location>
    <ligand>
        <name>pyridoxal 5'-phosphate</name>
        <dbReference type="ChEBI" id="CHEBI:597326"/>
    </ligand>
</feature>
<feature type="binding site" evidence="1">
    <location>
        <position position="155"/>
    </location>
    <ligand>
        <name>pyridoxal 5'-phosphate</name>
        <dbReference type="ChEBI" id="CHEBI:597326"/>
    </ligand>
</feature>
<feature type="binding site" evidence="1">
    <location>
        <position position="183"/>
    </location>
    <ligand>
        <name>pyridoxal 5'-phosphate</name>
        <dbReference type="ChEBI" id="CHEBI:597326"/>
    </ligand>
</feature>
<feature type="binding site" evidence="1">
    <location>
        <begin position="203"/>
        <end position="205"/>
    </location>
    <ligand>
        <name>pyridoxal 5'-phosphate</name>
        <dbReference type="ChEBI" id="CHEBI:597326"/>
    </ligand>
</feature>
<feature type="binding site" evidence="1">
    <location>
        <position position="243"/>
    </location>
    <ligand>
        <name>pyridoxal 5'-phosphate</name>
        <dbReference type="ChEBI" id="CHEBI:597326"/>
    </ligand>
</feature>
<feature type="binding site" description="via persulfide group" evidence="1">
    <location>
        <position position="328"/>
    </location>
    <ligand>
        <name>[2Fe-2S] cluster</name>
        <dbReference type="ChEBI" id="CHEBI:190135"/>
        <note>ligand shared with IscU</note>
    </ligand>
</feature>
<feature type="modified residue" description="N6-(pyridoxal phosphate)lysine" evidence="1">
    <location>
        <position position="206"/>
    </location>
</feature>
<protein>
    <recommendedName>
        <fullName evidence="1">Cysteine desulfurase IscS</fullName>
        <ecNumber evidence="1">2.8.1.7</ecNumber>
    </recommendedName>
</protein>
<gene>
    <name evidence="1" type="primary">iscS</name>
    <name type="ordered locus">Shal_1572</name>
</gene>
<dbReference type="EC" id="2.8.1.7" evidence="1"/>
<dbReference type="EMBL" id="CP000931">
    <property type="protein sequence ID" value="ABZ76138.1"/>
    <property type="molecule type" value="Genomic_DNA"/>
</dbReference>
<dbReference type="RefSeq" id="WP_012276677.1">
    <property type="nucleotide sequence ID" value="NC_010334.1"/>
</dbReference>
<dbReference type="SMR" id="B0TNY1"/>
<dbReference type="STRING" id="458817.Shal_1572"/>
<dbReference type="KEGG" id="shl:Shal_1572"/>
<dbReference type="eggNOG" id="COG1104">
    <property type="taxonomic scope" value="Bacteria"/>
</dbReference>
<dbReference type="HOGENOM" id="CLU_003433_0_2_6"/>
<dbReference type="OrthoDB" id="9808002at2"/>
<dbReference type="UniPathway" id="UPA00266"/>
<dbReference type="Proteomes" id="UP000001317">
    <property type="component" value="Chromosome"/>
</dbReference>
<dbReference type="GO" id="GO:1990221">
    <property type="term" value="C:L-cysteine desulfurase complex"/>
    <property type="evidence" value="ECO:0007669"/>
    <property type="project" value="UniProtKB-ARBA"/>
</dbReference>
<dbReference type="GO" id="GO:0051537">
    <property type="term" value="F:2 iron, 2 sulfur cluster binding"/>
    <property type="evidence" value="ECO:0007669"/>
    <property type="project" value="UniProtKB-UniRule"/>
</dbReference>
<dbReference type="GO" id="GO:0031071">
    <property type="term" value="F:cysteine desulfurase activity"/>
    <property type="evidence" value="ECO:0007669"/>
    <property type="project" value="UniProtKB-UniRule"/>
</dbReference>
<dbReference type="GO" id="GO:0046872">
    <property type="term" value="F:metal ion binding"/>
    <property type="evidence" value="ECO:0007669"/>
    <property type="project" value="UniProtKB-KW"/>
</dbReference>
<dbReference type="GO" id="GO:0030170">
    <property type="term" value="F:pyridoxal phosphate binding"/>
    <property type="evidence" value="ECO:0007669"/>
    <property type="project" value="UniProtKB-UniRule"/>
</dbReference>
<dbReference type="GO" id="GO:0044571">
    <property type="term" value="P:[2Fe-2S] cluster assembly"/>
    <property type="evidence" value="ECO:0007669"/>
    <property type="project" value="UniProtKB-UniRule"/>
</dbReference>
<dbReference type="FunFam" id="3.40.640.10:FF:000003">
    <property type="entry name" value="Cysteine desulfurase IscS"/>
    <property type="match status" value="1"/>
</dbReference>
<dbReference type="FunFam" id="3.90.1150.10:FF:000002">
    <property type="entry name" value="Cysteine desulfurase IscS"/>
    <property type="match status" value="1"/>
</dbReference>
<dbReference type="Gene3D" id="3.90.1150.10">
    <property type="entry name" value="Aspartate Aminotransferase, domain 1"/>
    <property type="match status" value="1"/>
</dbReference>
<dbReference type="Gene3D" id="3.40.640.10">
    <property type="entry name" value="Type I PLP-dependent aspartate aminotransferase-like (Major domain)"/>
    <property type="match status" value="1"/>
</dbReference>
<dbReference type="HAMAP" id="MF_00331">
    <property type="entry name" value="Cys_desulf_IscS"/>
    <property type="match status" value="1"/>
</dbReference>
<dbReference type="InterPro" id="IPR000192">
    <property type="entry name" value="Aminotrans_V_dom"/>
</dbReference>
<dbReference type="InterPro" id="IPR020578">
    <property type="entry name" value="Aminotrans_V_PyrdxlP_BS"/>
</dbReference>
<dbReference type="InterPro" id="IPR010240">
    <property type="entry name" value="Cys_deSase_IscS"/>
</dbReference>
<dbReference type="InterPro" id="IPR016454">
    <property type="entry name" value="Cysteine_dSase"/>
</dbReference>
<dbReference type="InterPro" id="IPR015424">
    <property type="entry name" value="PyrdxlP-dep_Trfase"/>
</dbReference>
<dbReference type="InterPro" id="IPR015421">
    <property type="entry name" value="PyrdxlP-dep_Trfase_major"/>
</dbReference>
<dbReference type="InterPro" id="IPR015422">
    <property type="entry name" value="PyrdxlP-dep_Trfase_small"/>
</dbReference>
<dbReference type="NCBIfam" id="TIGR02006">
    <property type="entry name" value="IscS"/>
    <property type="match status" value="1"/>
</dbReference>
<dbReference type="NCBIfam" id="NF010611">
    <property type="entry name" value="PRK14012.1"/>
    <property type="match status" value="1"/>
</dbReference>
<dbReference type="PANTHER" id="PTHR11601:SF34">
    <property type="entry name" value="CYSTEINE DESULFURASE"/>
    <property type="match status" value="1"/>
</dbReference>
<dbReference type="PANTHER" id="PTHR11601">
    <property type="entry name" value="CYSTEINE DESULFURYLASE FAMILY MEMBER"/>
    <property type="match status" value="1"/>
</dbReference>
<dbReference type="Pfam" id="PF00266">
    <property type="entry name" value="Aminotran_5"/>
    <property type="match status" value="1"/>
</dbReference>
<dbReference type="PIRSF" id="PIRSF005572">
    <property type="entry name" value="NifS"/>
    <property type="match status" value="1"/>
</dbReference>
<dbReference type="SUPFAM" id="SSF53383">
    <property type="entry name" value="PLP-dependent transferases"/>
    <property type="match status" value="1"/>
</dbReference>
<dbReference type="PROSITE" id="PS00595">
    <property type="entry name" value="AA_TRANSFER_CLASS_5"/>
    <property type="match status" value="1"/>
</dbReference>
<accession>B0TNY1</accession>
<proteinExistence type="inferred from homology"/>
<comment type="function">
    <text evidence="1">Master enzyme that delivers sulfur to a number of partners involved in Fe-S cluster assembly, tRNA modification or cofactor biosynthesis. Catalyzes the removal of elemental sulfur atoms from cysteine to produce alanine. Functions as a sulfur delivery protein for Fe-S cluster synthesis onto IscU, an Fe-S scaffold assembly protein, as well as other S acceptor proteins.</text>
</comment>
<comment type="catalytic activity">
    <reaction evidence="1">
        <text>(sulfur carrier)-H + L-cysteine = (sulfur carrier)-SH + L-alanine</text>
        <dbReference type="Rhea" id="RHEA:43892"/>
        <dbReference type="Rhea" id="RHEA-COMP:14737"/>
        <dbReference type="Rhea" id="RHEA-COMP:14739"/>
        <dbReference type="ChEBI" id="CHEBI:29917"/>
        <dbReference type="ChEBI" id="CHEBI:35235"/>
        <dbReference type="ChEBI" id="CHEBI:57972"/>
        <dbReference type="ChEBI" id="CHEBI:64428"/>
        <dbReference type="EC" id="2.8.1.7"/>
    </reaction>
</comment>
<comment type="cofactor">
    <cofactor evidence="1">
        <name>pyridoxal 5'-phosphate</name>
        <dbReference type="ChEBI" id="CHEBI:597326"/>
    </cofactor>
</comment>
<comment type="pathway">
    <text evidence="1">Cofactor biosynthesis; iron-sulfur cluster biosynthesis.</text>
</comment>
<comment type="subunit">
    <text evidence="1">Homodimer. Forms a heterotetramer with IscU, interacts with other sulfur acceptors.</text>
</comment>
<comment type="subcellular location">
    <subcellularLocation>
        <location evidence="1">Cytoplasm</location>
    </subcellularLocation>
</comment>
<comment type="similarity">
    <text evidence="1">Belongs to the class-V pyridoxal-phosphate-dependent aminotransferase family. NifS/IscS subfamily.</text>
</comment>
<reference key="1">
    <citation type="submission" date="2008-01" db="EMBL/GenBank/DDBJ databases">
        <title>Complete sequence of Shewanella halifaxensis HAW-EB4.</title>
        <authorList>
            <consortium name="US DOE Joint Genome Institute"/>
            <person name="Copeland A."/>
            <person name="Lucas S."/>
            <person name="Lapidus A."/>
            <person name="Glavina del Rio T."/>
            <person name="Dalin E."/>
            <person name="Tice H."/>
            <person name="Bruce D."/>
            <person name="Goodwin L."/>
            <person name="Pitluck S."/>
            <person name="Sims D."/>
            <person name="Brettin T."/>
            <person name="Detter J.C."/>
            <person name="Han C."/>
            <person name="Kuske C.R."/>
            <person name="Schmutz J."/>
            <person name="Larimer F."/>
            <person name="Land M."/>
            <person name="Hauser L."/>
            <person name="Kyrpides N."/>
            <person name="Kim E."/>
            <person name="Zhao J.-S."/>
            <person name="Richardson P."/>
        </authorList>
    </citation>
    <scope>NUCLEOTIDE SEQUENCE [LARGE SCALE GENOMIC DNA]</scope>
    <source>
        <strain>HAW-EB4</strain>
    </source>
</reference>